<proteinExistence type="inferred from homology"/>
<protein>
    <recommendedName>
        <fullName evidence="1">Elongation factor P</fullName>
        <shortName evidence="1">EF-P</shortName>
    </recommendedName>
</protein>
<sequence>MKTAQELRTGNVVMIGADAMVVQKAEYNKSGRNSAVVKMKFKNLLTGAGMESVYKADDKFDVVVLERKEVTYSYFADPMYVFMDADYNQFEVEGEMMGDALHYLEDGMACEVVFYNEKAISVELPTTLVREIIYTEPAVKGDTSSGKVLKNAKLNTGFELQVPLFCNIGDKIEIDTRTHEYRSRA</sequence>
<dbReference type="EMBL" id="CP001052">
    <property type="protein sequence ID" value="ACD17285.1"/>
    <property type="molecule type" value="Genomic_DNA"/>
</dbReference>
<dbReference type="RefSeq" id="WP_012433870.1">
    <property type="nucleotide sequence ID" value="NC_010681.1"/>
</dbReference>
<dbReference type="SMR" id="B2SZU7"/>
<dbReference type="STRING" id="398527.Bphyt_2891"/>
<dbReference type="GeneID" id="97307909"/>
<dbReference type="KEGG" id="bpy:Bphyt_2891"/>
<dbReference type="eggNOG" id="COG0231">
    <property type="taxonomic scope" value="Bacteria"/>
</dbReference>
<dbReference type="HOGENOM" id="CLU_074944_2_1_4"/>
<dbReference type="OrthoDB" id="9801844at2"/>
<dbReference type="UniPathway" id="UPA00345"/>
<dbReference type="Proteomes" id="UP000001739">
    <property type="component" value="Chromosome 1"/>
</dbReference>
<dbReference type="GO" id="GO:0005737">
    <property type="term" value="C:cytoplasm"/>
    <property type="evidence" value="ECO:0007669"/>
    <property type="project" value="UniProtKB-SubCell"/>
</dbReference>
<dbReference type="GO" id="GO:0003746">
    <property type="term" value="F:translation elongation factor activity"/>
    <property type="evidence" value="ECO:0007669"/>
    <property type="project" value="UniProtKB-UniRule"/>
</dbReference>
<dbReference type="GO" id="GO:0043043">
    <property type="term" value="P:peptide biosynthetic process"/>
    <property type="evidence" value="ECO:0007669"/>
    <property type="project" value="InterPro"/>
</dbReference>
<dbReference type="CDD" id="cd04470">
    <property type="entry name" value="S1_EF-P_repeat_1"/>
    <property type="match status" value="1"/>
</dbReference>
<dbReference type="CDD" id="cd05794">
    <property type="entry name" value="S1_EF-P_repeat_2"/>
    <property type="match status" value="1"/>
</dbReference>
<dbReference type="FunFam" id="2.30.30.30:FF:000003">
    <property type="entry name" value="Elongation factor P"/>
    <property type="match status" value="1"/>
</dbReference>
<dbReference type="FunFam" id="2.40.50.140:FF:000004">
    <property type="entry name" value="Elongation factor P"/>
    <property type="match status" value="1"/>
</dbReference>
<dbReference type="FunFam" id="2.40.50.140:FF:000009">
    <property type="entry name" value="Elongation factor P"/>
    <property type="match status" value="1"/>
</dbReference>
<dbReference type="Gene3D" id="2.30.30.30">
    <property type="match status" value="1"/>
</dbReference>
<dbReference type="Gene3D" id="2.40.50.140">
    <property type="entry name" value="Nucleic acid-binding proteins"/>
    <property type="match status" value="2"/>
</dbReference>
<dbReference type="HAMAP" id="MF_00141">
    <property type="entry name" value="EF_P"/>
    <property type="match status" value="1"/>
</dbReference>
<dbReference type="InterPro" id="IPR015365">
    <property type="entry name" value="Elong-fact-P_C"/>
</dbReference>
<dbReference type="InterPro" id="IPR012340">
    <property type="entry name" value="NA-bd_OB-fold"/>
</dbReference>
<dbReference type="InterPro" id="IPR014722">
    <property type="entry name" value="Rib_uL2_dom2"/>
</dbReference>
<dbReference type="InterPro" id="IPR020599">
    <property type="entry name" value="Transl_elong_fac_P/YeiP"/>
</dbReference>
<dbReference type="InterPro" id="IPR013185">
    <property type="entry name" value="Transl_elong_KOW-like"/>
</dbReference>
<dbReference type="InterPro" id="IPR001059">
    <property type="entry name" value="Transl_elong_P/YeiP_cen"/>
</dbReference>
<dbReference type="InterPro" id="IPR013852">
    <property type="entry name" value="Transl_elong_P/YeiP_CS"/>
</dbReference>
<dbReference type="InterPro" id="IPR011768">
    <property type="entry name" value="Transl_elongation_fac_P"/>
</dbReference>
<dbReference type="InterPro" id="IPR008991">
    <property type="entry name" value="Translation_prot_SH3-like_sf"/>
</dbReference>
<dbReference type="NCBIfam" id="TIGR00038">
    <property type="entry name" value="efp"/>
    <property type="match status" value="1"/>
</dbReference>
<dbReference type="NCBIfam" id="NF001810">
    <property type="entry name" value="PRK00529.1"/>
    <property type="match status" value="1"/>
</dbReference>
<dbReference type="PANTHER" id="PTHR30053">
    <property type="entry name" value="ELONGATION FACTOR P"/>
    <property type="match status" value="1"/>
</dbReference>
<dbReference type="PANTHER" id="PTHR30053:SF12">
    <property type="entry name" value="ELONGATION FACTOR P (EF-P) FAMILY PROTEIN"/>
    <property type="match status" value="1"/>
</dbReference>
<dbReference type="Pfam" id="PF01132">
    <property type="entry name" value="EFP"/>
    <property type="match status" value="1"/>
</dbReference>
<dbReference type="Pfam" id="PF08207">
    <property type="entry name" value="EFP_N"/>
    <property type="match status" value="1"/>
</dbReference>
<dbReference type="Pfam" id="PF09285">
    <property type="entry name" value="Elong-fact-P_C"/>
    <property type="match status" value="1"/>
</dbReference>
<dbReference type="PIRSF" id="PIRSF005901">
    <property type="entry name" value="EF-P"/>
    <property type="match status" value="1"/>
</dbReference>
<dbReference type="SMART" id="SM01185">
    <property type="entry name" value="EFP"/>
    <property type="match status" value="1"/>
</dbReference>
<dbReference type="SMART" id="SM00841">
    <property type="entry name" value="Elong-fact-P_C"/>
    <property type="match status" value="1"/>
</dbReference>
<dbReference type="SUPFAM" id="SSF50249">
    <property type="entry name" value="Nucleic acid-binding proteins"/>
    <property type="match status" value="2"/>
</dbReference>
<dbReference type="SUPFAM" id="SSF50104">
    <property type="entry name" value="Translation proteins SH3-like domain"/>
    <property type="match status" value="1"/>
</dbReference>
<dbReference type="PROSITE" id="PS01275">
    <property type="entry name" value="EFP"/>
    <property type="match status" value="1"/>
</dbReference>
<accession>B2SZU7</accession>
<evidence type="ECO:0000255" key="1">
    <source>
        <dbReference type="HAMAP-Rule" id="MF_00141"/>
    </source>
</evidence>
<comment type="function">
    <text evidence="1">Involved in peptide bond synthesis. Stimulates efficient translation and peptide-bond synthesis on native or reconstituted 70S ribosomes in vitro. Probably functions indirectly by altering the affinity of the ribosome for aminoacyl-tRNA, thus increasing their reactivity as acceptors for peptidyl transferase.</text>
</comment>
<comment type="pathway">
    <text evidence="1">Protein biosynthesis; polypeptide chain elongation.</text>
</comment>
<comment type="subcellular location">
    <subcellularLocation>
        <location evidence="1">Cytoplasm</location>
    </subcellularLocation>
</comment>
<comment type="similarity">
    <text evidence="1">Belongs to the elongation factor P family.</text>
</comment>
<name>EFP_PARPJ</name>
<feature type="chain" id="PRO_1000096132" description="Elongation factor P">
    <location>
        <begin position="1"/>
        <end position="185"/>
    </location>
</feature>
<reference key="1">
    <citation type="journal article" date="2011" name="J. Bacteriol.">
        <title>Complete genome sequence of the plant growth-promoting endophyte Burkholderia phytofirmans strain PsJN.</title>
        <authorList>
            <person name="Weilharter A."/>
            <person name="Mitter B."/>
            <person name="Shin M.V."/>
            <person name="Chain P.S."/>
            <person name="Nowak J."/>
            <person name="Sessitsch A."/>
        </authorList>
    </citation>
    <scope>NUCLEOTIDE SEQUENCE [LARGE SCALE GENOMIC DNA]</scope>
    <source>
        <strain>DSM 17436 / LMG 22146 / PsJN</strain>
    </source>
</reference>
<gene>
    <name evidence="1" type="primary">efp</name>
    <name type="ordered locus">Bphyt_2891</name>
</gene>
<keyword id="KW-0963">Cytoplasm</keyword>
<keyword id="KW-0251">Elongation factor</keyword>
<keyword id="KW-0648">Protein biosynthesis</keyword>
<organism>
    <name type="scientific">Paraburkholderia phytofirmans (strain DSM 17436 / LMG 22146 / PsJN)</name>
    <name type="common">Burkholderia phytofirmans</name>
    <dbReference type="NCBI Taxonomy" id="398527"/>
    <lineage>
        <taxon>Bacteria</taxon>
        <taxon>Pseudomonadati</taxon>
        <taxon>Pseudomonadota</taxon>
        <taxon>Betaproteobacteria</taxon>
        <taxon>Burkholderiales</taxon>
        <taxon>Burkholderiaceae</taxon>
        <taxon>Paraburkholderia</taxon>
    </lineage>
</organism>